<comment type="function">
    <text evidence="1">High-affinity transporter for external inorganic phosphate.</text>
</comment>
<comment type="subcellular location">
    <subcellularLocation>
        <location evidence="1">Membrane</location>
        <topology evidence="1">Multi-pass membrane protein</topology>
    </subcellularLocation>
</comment>
<comment type="tissue specificity">
    <text evidence="4">Expressed at low levels in roots.</text>
</comment>
<comment type="miscellaneous">
    <text>Although related to the sugar transporter family, it does not transport sugars.</text>
</comment>
<comment type="similarity">
    <text evidence="5">Belongs to the major facilitator superfamily. Phosphate:H(+) symporter (TC 2.A.1.9) family.</text>
</comment>
<comment type="sequence caution" evidence="5">
    <conflict type="frameshift">
        <sequence resource="EMBL-CDS" id="AAN39051"/>
    </conflict>
</comment>
<evidence type="ECO:0000250" key="1"/>
<evidence type="ECO:0000255" key="2"/>
<evidence type="ECO:0000256" key="3">
    <source>
        <dbReference type="SAM" id="MobiDB-lite"/>
    </source>
</evidence>
<evidence type="ECO:0000269" key="4">
    <source>
    </source>
</evidence>
<evidence type="ECO:0000305" key="5"/>
<accession>Q69T94</accession>
<accession>C7J3M5</accession>
<accession>Q8H6G6</accession>
<name>PT110_ORYSJ</name>
<keyword id="KW-0472">Membrane</keyword>
<keyword id="KW-0592">Phosphate transport</keyword>
<keyword id="KW-1185">Reference proteome</keyword>
<keyword id="KW-0769">Symport</keyword>
<keyword id="KW-0812">Transmembrane</keyword>
<keyword id="KW-1133">Transmembrane helix</keyword>
<keyword id="KW-0813">Transport</keyword>
<protein>
    <recommendedName>
        <fullName>Probable inorganic phosphate transporter 1-10</fullName>
        <shortName>OsPT10</shortName>
        <shortName>OsPht1;10</shortName>
    </recommendedName>
    <alternativeName>
        <fullName>H(+)/Pi cotransporter</fullName>
    </alternativeName>
</protein>
<feature type="chain" id="PRO_0000365490" description="Probable inorganic phosphate transporter 1-10">
    <location>
        <begin position="1"/>
        <end position="552"/>
    </location>
</feature>
<feature type="topological domain" description="Cytoplasmic" evidence="2">
    <location>
        <begin position="1"/>
        <end position="22"/>
    </location>
</feature>
<feature type="transmembrane region" description="Helical" evidence="2">
    <location>
        <begin position="23"/>
        <end position="43"/>
    </location>
</feature>
<feature type="topological domain" description="Extracellular" evidence="2">
    <location>
        <begin position="44"/>
        <end position="68"/>
    </location>
</feature>
<feature type="transmembrane region" description="Helical" evidence="2">
    <location>
        <begin position="69"/>
        <end position="89"/>
    </location>
</feature>
<feature type="topological domain" description="Cytoplasmic" evidence="2">
    <location>
        <begin position="90"/>
        <end position="96"/>
    </location>
</feature>
<feature type="transmembrane region" description="Helical" evidence="2">
    <location>
        <begin position="97"/>
        <end position="117"/>
    </location>
</feature>
<feature type="topological domain" description="Extracellular" evidence="2">
    <location>
        <begin position="118"/>
        <end position="123"/>
    </location>
</feature>
<feature type="transmembrane region" description="Helical" evidence="2">
    <location>
        <begin position="124"/>
        <end position="144"/>
    </location>
</feature>
<feature type="topological domain" description="Cytoplasmic" evidence="2">
    <location>
        <begin position="145"/>
        <end position="158"/>
    </location>
</feature>
<feature type="transmembrane region" description="Helical" evidence="2">
    <location>
        <begin position="159"/>
        <end position="179"/>
    </location>
</feature>
<feature type="topological domain" description="Extracellular" evidence="2">
    <location>
        <begin position="180"/>
        <end position="203"/>
    </location>
</feature>
<feature type="transmembrane region" description="Helical" evidence="2">
    <location>
        <begin position="204"/>
        <end position="224"/>
    </location>
</feature>
<feature type="topological domain" description="Cytoplasmic" evidence="2">
    <location>
        <begin position="225"/>
        <end position="295"/>
    </location>
</feature>
<feature type="transmembrane region" description="Helical" evidence="2">
    <location>
        <begin position="296"/>
        <end position="316"/>
    </location>
</feature>
<feature type="topological domain" description="Extracellular" evidence="2">
    <location>
        <begin position="317"/>
        <end position="342"/>
    </location>
</feature>
<feature type="transmembrane region" description="Helical" evidence="2">
    <location>
        <begin position="343"/>
        <end position="363"/>
    </location>
</feature>
<feature type="topological domain" description="Cytoplasmic" evidence="2">
    <location>
        <begin position="364"/>
        <end position="369"/>
    </location>
</feature>
<feature type="transmembrane region" description="Helical" evidence="2">
    <location>
        <begin position="370"/>
        <end position="390"/>
    </location>
</feature>
<feature type="topological domain" description="Extracellular" evidence="2">
    <location>
        <begin position="391"/>
        <end position="397"/>
    </location>
</feature>
<feature type="transmembrane region" description="Helical" evidence="2">
    <location>
        <begin position="398"/>
        <end position="418"/>
    </location>
</feature>
<feature type="topological domain" description="Cytoplasmic" evidence="2">
    <location>
        <begin position="419"/>
        <end position="439"/>
    </location>
</feature>
<feature type="transmembrane region" description="Helical" evidence="2">
    <location>
        <begin position="440"/>
        <end position="460"/>
    </location>
</feature>
<feature type="topological domain" description="Extracellular" evidence="2">
    <location>
        <begin position="461"/>
        <end position="473"/>
    </location>
</feature>
<feature type="transmembrane region" description="Helical" evidence="2">
    <location>
        <begin position="474"/>
        <end position="494"/>
    </location>
</feature>
<feature type="topological domain" description="Cytoplasmic" evidence="2">
    <location>
        <begin position="495"/>
        <end position="552"/>
    </location>
</feature>
<feature type="region of interest" description="Disordered" evidence="3">
    <location>
        <begin position="507"/>
        <end position="540"/>
    </location>
</feature>
<proteinExistence type="evidence at transcript level"/>
<sequence>MAPIGVLTALDQARTQYYHFKAIVIAGMGLFTDSYDLFCIAPVMKIVGRVYYSDGGARPGVTPPAVVSATVGVALLGAVIGNVVFGALGDRVGRRRVYGACLLLMVCSSVGSGFSVCRTRRCALASLCFFRFLLGVGVGGDYPLSATIMSEFANRRTRGAFIAAVFSMQGFGILASSAVTMAVAAAFDHYTGYPAPLDTPECADLAWRIILMAGAVPAALTYYWRMSMPETARYTALVERDVVKATNDIGRVLADLDLGAVAEEEVAAALSRPPPPPRPSYGLLSRRFVRQHGRDLFACAAAWFLLDIPYYSSTLFQSQIYRPLFPAPGLINAFQEAFNVAKFQAVIAVASTIPGYFVAVLLIDRVGRRCLQMAGFLLMAVFLFALAGPYDGYWRDHGAHAGYIVLYSLTFFSANLGPNTTTFILPAELFPARFRSTCHGLSGAAGKLGALVGSIGFLWASQQKDGAAAGHLPGIGMMYALFVLGGICLLGLALTYVFTPETMMRSLEENESDRAQTQVGDGGSDTEAAKSPASMASSHLSMSPILPARVSV</sequence>
<gene>
    <name type="primary">PHT1-10</name>
    <name type="synonym">PT10</name>
    <name type="ordered locus">Os06g0325200</name>
    <name type="ordered locus">LOC_Os06g21950</name>
    <name type="ORF">OsJ_020312</name>
    <name type="ORF">P0421H01.35</name>
    <name type="ORF">P0652D10.5</name>
</gene>
<dbReference type="EMBL" id="AF536970">
    <property type="protein sequence ID" value="AAN39051.1"/>
    <property type="status" value="ALT_FRAME"/>
    <property type="molecule type" value="Genomic_DNA"/>
</dbReference>
<dbReference type="EMBL" id="AP004750">
    <property type="protein sequence ID" value="BAD61874.1"/>
    <property type="molecule type" value="Genomic_DNA"/>
</dbReference>
<dbReference type="EMBL" id="AP004757">
    <property type="protein sequence ID" value="BAD33230.1"/>
    <property type="molecule type" value="Genomic_DNA"/>
</dbReference>
<dbReference type="EMBL" id="AP008212">
    <property type="protein sequence ID" value="BAH93489.1"/>
    <property type="molecule type" value="Genomic_DNA"/>
</dbReference>
<dbReference type="EMBL" id="AP014962">
    <property type="protein sequence ID" value="BAS97521.1"/>
    <property type="molecule type" value="Genomic_DNA"/>
</dbReference>
<dbReference type="EMBL" id="CM000143">
    <property type="protein sequence ID" value="EAZ36829.1"/>
    <property type="molecule type" value="Genomic_DNA"/>
</dbReference>
<dbReference type="RefSeq" id="XP_015642566.1">
    <property type="nucleotide sequence ID" value="XM_015787080.1"/>
</dbReference>
<dbReference type="SMR" id="Q69T94"/>
<dbReference type="FunCoup" id="Q69T94">
    <property type="interactions" value="459"/>
</dbReference>
<dbReference type="STRING" id="39947.Q69T94"/>
<dbReference type="PaxDb" id="39947-Q69T94"/>
<dbReference type="EnsemblPlants" id="Os06t0325200-01">
    <property type="protein sequence ID" value="Os06t0325200-01"/>
    <property type="gene ID" value="Os06g0325200"/>
</dbReference>
<dbReference type="Gramene" id="Os06t0325200-01">
    <property type="protein sequence ID" value="Os06t0325200-01"/>
    <property type="gene ID" value="Os06g0325200"/>
</dbReference>
<dbReference type="KEGG" id="dosa:Os06g0325200"/>
<dbReference type="eggNOG" id="KOG0252">
    <property type="taxonomic scope" value="Eukaryota"/>
</dbReference>
<dbReference type="HOGENOM" id="CLU_001265_46_14_1"/>
<dbReference type="InParanoid" id="Q69T94"/>
<dbReference type="OMA" id="FKVARFQ"/>
<dbReference type="OrthoDB" id="433512at2759"/>
<dbReference type="Proteomes" id="UP000000763">
    <property type="component" value="Chromosome 6"/>
</dbReference>
<dbReference type="Proteomes" id="UP000007752">
    <property type="component" value="Chromosome 6"/>
</dbReference>
<dbReference type="Proteomes" id="UP000059680">
    <property type="component" value="Chromosome 6"/>
</dbReference>
<dbReference type="GO" id="GO:0016020">
    <property type="term" value="C:membrane"/>
    <property type="evidence" value="ECO:0007669"/>
    <property type="project" value="UniProtKB-SubCell"/>
</dbReference>
<dbReference type="GO" id="GO:0015293">
    <property type="term" value="F:symporter activity"/>
    <property type="evidence" value="ECO:0007669"/>
    <property type="project" value="UniProtKB-KW"/>
</dbReference>
<dbReference type="GO" id="GO:0006817">
    <property type="term" value="P:phosphate ion transport"/>
    <property type="evidence" value="ECO:0007669"/>
    <property type="project" value="UniProtKB-KW"/>
</dbReference>
<dbReference type="CDD" id="cd17364">
    <property type="entry name" value="MFS_PhT"/>
    <property type="match status" value="1"/>
</dbReference>
<dbReference type="FunFam" id="1.20.1250.20:FF:000175">
    <property type="entry name" value="Inorganic phosphate transporter 1-6"/>
    <property type="match status" value="1"/>
</dbReference>
<dbReference type="Gene3D" id="1.20.1250.20">
    <property type="entry name" value="MFS general substrate transporter like domains"/>
    <property type="match status" value="2"/>
</dbReference>
<dbReference type="InterPro" id="IPR020846">
    <property type="entry name" value="MFS_dom"/>
</dbReference>
<dbReference type="InterPro" id="IPR005828">
    <property type="entry name" value="MFS_sugar_transport-like"/>
</dbReference>
<dbReference type="InterPro" id="IPR036259">
    <property type="entry name" value="MFS_trans_sf"/>
</dbReference>
<dbReference type="InterPro" id="IPR005829">
    <property type="entry name" value="Sugar_transporter_CS"/>
</dbReference>
<dbReference type="PANTHER" id="PTHR24064">
    <property type="entry name" value="SOLUTE CARRIER FAMILY 22 MEMBER"/>
    <property type="match status" value="1"/>
</dbReference>
<dbReference type="Pfam" id="PF00083">
    <property type="entry name" value="Sugar_tr"/>
    <property type="match status" value="1"/>
</dbReference>
<dbReference type="SUPFAM" id="SSF103473">
    <property type="entry name" value="MFS general substrate transporter"/>
    <property type="match status" value="1"/>
</dbReference>
<dbReference type="PROSITE" id="PS50850">
    <property type="entry name" value="MFS"/>
    <property type="match status" value="1"/>
</dbReference>
<dbReference type="PROSITE" id="PS00216">
    <property type="entry name" value="SUGAR_TRANSPORT_1"/>
    <property type="match status" value="1"/>
</dbReference>
<dbReference type="PROSITE" id="PS00217">
    <property type="entry name" value="SUGAR_TRANSPORT_2"/>
    <property type="match status" value="1"/>
</dbReference>
<reference key="1">
    <citation type="journal article" date="2002" name="Proc. Natl. Acad. Sci. U.S.A.">
        <title>Rice phosphate transporters include an evolutionarily divergent gene specifically activated in arbuscular mycorrhizal symbiosis.</title>
        <authorList>
            <person name="Paszkowski U."/>
            <person name="Kroken S."/>
            <person name="Roux C."/>
            <person name="Briggs S.P."/>
        </authorList>
    </citation>
    <scope>NUCLEOTIDE SEQUENCE [GENOMIC DNA]</scope>
    <scope>TISSUE SPECIFICITY</scope>
</reference>
<reference key="2">
    <citation type="journal article" date="2005" name="Nature">
        <title>The map-based sequence of the rice genome.</title>
        <authorList>
            <consortium name="International rice genome sequencing project (IRGSP)"/>
        </authorList>
    </citation>
    <scope>NUCLEOTIDE SEQUENCE [LARGE SCALE GENOMIC DNA]</scope>
    <source>
        <strain>cv. Nipponbare</strain>
    </source>
</reference>
<reference key="3">
    <citation type="journal article" date="2008" name="Nucleic Acids Res.">
        <title>The rice annotation project database (RAP-DB): 2008 update.</title>
        <authorList>
            <consortium name="The rice annotation project (RAP)"/>
        </authorList>
    </citation>
    <scope>GENOME REANNOTATION</scope>
    <source>
        <strain>cv. Nipponbare</strain>
    </source>
</reference>
<reference key="4">
    <citation type="journal article" date="2013" name="Rice">
        <title>Improvement of the Oryza sativa Nipponbare reference genome using next generation sequence and optical map data.</title>
        <authorList>
            <person name="Kawahara Y."/>
            <person name="de la Bastide M."/>
            <person name="Hamilton J.P."/>
            <person name="Kanamori H."/>
            <person name="McCombie W.R."/>
            <person name="Ouyang S."/>
            <person name="Schwartz D.C."/>
            <person name="Tanaka T."/>
            <person name="Wu J."/>
            <person name="Zhou S."/>
            <person name="Childs K.L."/>
            <person name="Davidson R.M."/>
            <person name="Lin H."/>
            <person name="Quesada-Ocampo L."/>
            <person name="Vaillancourt B."/>
            <person name="Sakai H."/>
            <person name="Lee S.S."/>
            <person name="Kim J."/>
            <person name="Numa H."/>
            <person name="Itoh T."/>
            <person name="Buell C.R."/>
            <person name="Matsumoto T."/>
        </authorList>
    </citation>
    <scope>GENOME REANNOTATION</scope>
    <source>
        <strain>cv. Nipponbare</strain>
    </source>
</reference>
<reference key="5">
    <citation type="journal article" date="2005" name="PLoS Biol.">
        <title>The genomes of Oryza sativa: a history of duplications.</title>
        <authorList>
            <person name="Yu J."/>
            <person name="Wang J."/>
            <person name="Lin W."/>
            <person name="Li S."/>
            <person name="Li H."/>
            <person name="Zhou J."/>
            <person name="Ni P."/>
            <person name="Dong W."/>
            <person name="Hu S."/>
            <person name="Zeng C."/>
            <person name="Zhang J."/>
            <person name="Zhang Y."/>
            <person name="Li R."/>
            <person name="Xu Z."/>
            <person name="Li S."/>
            <person name="Li X."/>
            <person name="Zheng H."/>
            <person name="Cong L."/>
            <person name="Lin L."/>
            <person name="Yin J."/>
            <person name="Geng J."/>
            <person name="Li G."/>
            <person name="Shi J."/>
            <person name="Liu J."/>
            <person name="Lv H."/>
            <person name="Li J."/>
            <person name="Wang J."/>
            <person name="Deng Y."/>
            <person name="Ran L."/>
            <person name="Shi X."/>
            <person name="Wang X."/>
            <person name="Wu Q."/>
            <person name="Li C."/>
            <person name="Ren X."/>
            <person name="Wang J."/>
            <person name="Wang X."/>
            <person name="Li D."/>
            <person name="Liu D."/>
            <person name="Zhang X."/>
            <person name="Ji Z."/>
            <person name="Zhao W."/>
            <person name="Sun Y."/>
            <person name="Zhang Z."/>
            <person name="Bao J."/>
            <person name="Han Y."/>
            <person name="Dong L."/>
            <person name="Ji J."/>
            <person name="Chen P."/>
            <person name="Wu S."/>
            <person name="Liu J."/>
            <person name="Xiao Y."/>
            <person name="Bu D."/>
            <person name="Tan J."/>
            <person name="Yang L."/>
            <person name="Ye C."/>
            <person name="Zhang J."/>
            <person name="Xu J."/>
            <person name="Zhou Y."/>
            <person name="Yu Y."/>
            <person name="Zhang B."/>
            <person name="Zhuang S."/>
            <person name="Wei H."/>
            <person name="Liu B."/>
            <person name="Lei M."/>
            <person name="Yu H."/>
            <person name="Li Y."/>
            <person name="Xu H."/>
            <person name="Wei S."/>
            <person name="He X."/>
            <person name="Fang L."/>
            <person name="Zhang Z."/>
            <person name="Zhang Y."/>
            <person name="Huang X."/>
            <person name="Su Z."/>
            <person name="Tong W."/>
            <person name="Li J."/>
            <person name="Tong Z."/>
            <person name="Li S."/>
            <person name="Ye J."/>
            <person name="Wang L."/>
            <person name="Fang L."/>
            <person name="Lei T."/>
            <person name="Chen C.-S."/>
            <person name="Chen H.-C."/>
            <person name="Xu Z."/>
            <person name="Li H."/>
            <person name="Huang H."/>
            <person name="Zhang F."/>
            <person name="Xu H."/>
            <person name="Li N."/>
            <person name="Zhao C."/>
            <person name="Li S."/>
            <person name="Dong L."/>
            <person name="Huang Y."/>
            <person name="Li L."/>
            <person name="Xi Y."/>
            <person name="Qi Q."/>
            <person name="Li W."/>
            <person name="Zhang B."/>
            <person name="Hu W."/>
            <person name="Zhang Y."/>
            <person name="Tian X."/>
            <person name="Jiao Y."/>
            <person name="Liang X."/>
            <person name="Jin J."/>
            <person name="Gao L."/>
            <person name="Zheng W."/>
            <person name="Hao B."/>
            <person name="Liu S.-M."/>
            <person name="Wang W."/>
            <person name="Yuan L."/>
            <person name="Cao M."/>
            <person name="McDermott J."/>
            <person name="Samudrala R."/>
            <person name="Wang J."/>
            <person name="Wong G.K.-S."/>
            <person name="Yang H."/>
        </authorList>
    </citation>
    <scope>NUCLEOTIDE SEQUENCE [LARGE SCALE GENOMIC DNA]</scope>
    <source>
        <strain>cv. Nipponbare</strain>
    </source>
</reference>
<organism>
    <name type="scientific">Oryza sativa subsp. japonica</name>
    <name type="common">Rice</name>
    <dbReference type="NCBI Taxonomy" id="39947"/>
    <lineage>
        <taxon>Eukaryota</taxon>
        <taxon>Viridiplantae</taxon>
        <taxon>Streptophyta</taxon>
        <taxon>Embryophyta</taxon>
        <taxon>Tracheophyta</taxon>
        <taxon>Spermatophyta</taxon>
        <taxon>Magnoliopsida</taxon>
        <taxon>Liliopsida</taxon>
        <taxon>Poales</taxon>
        <taxon>Poaceae</taxon>
        <taxon>BOP clade</taxon>
        <taxon>Oryzoideae</taxon>
        <taxon>Oryzeae</taxon>
        <taxon>Oryzinae</taxon>
        <taxon>Oryza</taxon>
        <taxon>Oryza sativa</taxon>
    </lineage>
</organism>